<evidence type="ECO:0000255" key="1">
    <source>
        <dbReference type="HAMAP-Rule" id="MF_01334"/>
    </source>
</evidence>
<evidence type="ECO:0000256" key="2">
    <source>
        <dbReference type="SAM" id="MobiDB-lite"/>
    </source>
</evidence>
<evidence type="ECO:0000305" key="3"/>
<reference key="1">
    <citation type="submission" date="2008-08" db="EMBL/GenBank/DDBJ databases">
        <title>The complete genome sequence of Thermodesulfovibrio yellowstonii strain ATCC 51303 / DSM 11347 / YP87.</title>
        <authorList>
            <person name="Dodson R.J."/>
            <person name="Durkin A.S."/>
            <person name="Wu M."/>
            <person name="Eisen J."/>
            <person name="Sutton G."/>
        </authorList>
    </citation>
    <scope>NUCLEOTIDE SEQUENCE [LARGE SCALE GENOMIC DNA]</scope>
    <source>
        <strain>ATCC 51303 / DSM 11347 / YP87</strain>
    </source>
</reference>
<proteinExistence type="inferred from homology"/>
<dbReference type="EMBL" id="CP001147">
    <property type="protein sequence ID" value="ACI21541.1"/>
    <property type="molecule type" value="Genomic_DNA"/>
</dbReference>
<dbReference type="RefSeq" id="WP_012546254.1">
    <property type="nucleotide sequence ID" value="NC_011296.1"/>
</dbReference>
<dbReference type="RefSeq" id="YP_002249253.1">
    <property type="nucleotide sequence ID" value="NC_011296.1"/>
</dbReference>
<dbReference type="SMR" id="B5YG55"/>
<dbReference type="STRING" id="289376.THEYE_A1454"/>
<dbReference type="EnsemblBacteria" id="ACI21541">
    <property type="protein sequence ID" value="ACI21541"/>
    <property type="gene ID" value="THEYE_A1454"/>
</dbReference>
<dbReference type="KEGG" id="tye:THEYE_A1454"/>
<dbReference type="PATRIC" id="fig|289376.4.peg.1415"/>
<dbReference type="eggNOG" id="COG1825">
    <property type="taxonomic scope" value="Bacteria"/>
</dbReference>
<dbReference type="HOGENOM" id="CLU_075939_2_1_0"/>
<dbReference type="InParanoid" id="B5YG55"/>
<dbReference type="OrthoDB" id="9786489at2"/>
<dbReference type="Proteomes" id="UP000000718">
    <property type="component" value="Chromosome"/>
</dbReference>
<dbReference type="GO" id="GO:0022625">
    <property type="term" value="C:cytosolic large ribosomal subunit"/>
    <property type="evidence" value="ECO:0000318"/>
    <property type="project" value="GO_Central"/>
</dbReference>
<dbReference type="GO" id="GO:0008097">
    <property type="term" value="F:5S rRNA binding"/>
    <property type="evidence" value="ECO:0000318"/>
    <property type="project" value="GO_Central"/>
</dbReference>
<dbReference type="GO" id="GO:0003735">
    <property type="term" value="F:structural constituent of ribosome"/>
    <property type="evidence" value="ECO:0007669"/>
    <property type="project" value="InterPro"/>
</dbReference>
<dbReference type="GO" id="GO:0006412">
    <property type="term" value="P:translation"/>
    <property type="evidence" value="ECO:0000318"/>
    <property type="project" value="GO_Central"/>
</dbReference>
<dbReference type="CDD" id="cd00495">
    <property type="entry name" value="Ribosomal_L25_TL5_CTC"/>
    <property type="match status" value="1"/>
</dbReference>
<dbReference type="FunFam" id="2.170.120.20:FF:000003">
    <property type="entry name" value="50S ribosomal protein L25"/>
    <property type="match status" value="1"/>
</dbReference>
<dbReference type="Gene3D" id="2.170.120.20">
    <property type="entry name" value="Ribosomal protein L25, beta domain"/>
    <property type="match status" value="1"/>
</dbReference>
<dbReference type="Gene3D" id="2.40.240.10">
    <property type="entry name" value="Ribosomal Protein L25, Chain P"/>
    <property type="match status" value="1"/>
</dbReference>
<dbReference type="HAMAP" id="MF_01334">
    <property type="entry name" value="Ribosomal_bL25_CTC"/>
    <property type="match status" value="1"/>
</dbReference>
<dbReference type="InterPro" id="IPR020056">
    <property type="entry name" value="Rbsml_bL25/Gln-tRNA_synth_N"/>
</dbReference>
<dbReference type="InterPro" id="IPR011035">
    <property type="entry name" value="Ribosomal_bL25/Gln-tRNA_synth"/>
</dbReference>
<dbReference type="InterPro" id="IPR020057">
    <property type="entry name" value="Ribosomal_bL25_b-dom"/>
</dbReference>
<dbReference type="InterPro" id="IPR037121">
    <property type="entry name" value="Ribosomal_bL25_C"/>
</dbReference>
<dbReference type="InterPro" id="IPR001021">
    <property type="entry name" value="Ribosomal_bL25_long"/>
</dbReference>
<dbReference type="InterPro" id="IPR029751">
    <property type="entry name" value="Ribosomal_L25_dom"/>
</dbReference>
<dbReference type="InterPro" id="IPR020930">
    <property type="entry name" value="Ribosomal_uL5_bac-type"/>
</dbReference>
<dbReference type="NCBIfam" id="TIGR00731">
    <property type="entry name" value="bL25_bact_ctc"/>
    <property type="match status" value="1"/>
</dbReference>
<dbReference type="PANTHER" id="PTHR33284">
    <property type="entry name" value="RIBOSOMAL PROTEIN L25/GLN-TRNA SYNTHETASE, ANTI-CODON-BINDING DOMAIN-CONTAINING PROTEIN"/>
    <property type="match status" value="1"/>
</dbReference>
<dbReference type="PANTHER" id="PTHR33284:SF1">
    <property type="entry name" value="RIBOSOMAL PROTEIN L25_GLN-TRNA SYNTHETASE, ANTI-CODON-BINDING DOMAIN-CONTAINING PROTEIN"/>
    <property type="match status" value="1"/>
</dbReference>
<dbReference type="Pfam" id="PF01386">
    <property type="entry name" value="Ribosomal_L25p"/>
    <property type="match status" value="1"/>
</dbReference>
<dbReference type="Pfam" id="PF14693">
    <property type="entry name" value="Ribosomal_TL5_C"/>
    <property type="match status" value="1"/>
</dbReference>
<dbReference type="SUPFAM" id="SSF50715">
    <property type="entry name" value="Ribosomal protein L25-like"/>
    <property type="match status" value="1"/>
</dbReference>
<protein>
    <recommendedName>
        <fullName evidence="1">Large ribosomal subunit protein bL25</fullName>
    </recommendedName>
    <alternativeName>
        <fullName evidence="3">50S ribosomal protein L25</fullName>
    </alternativeName>
    <alternativeName>
        <fullName evidence="1">General stress protein CTC</fullName>
    </alternativeName>
</protein>
<accession>B5YG55</accession>
<sequence length="214" mass="23885">MEKFILNVEKRERTGKGIARQLRSKGIIPCVIYKNGQSTPVQIPTKELYTFMNIATREKLFVTLKLDGQEKQAILQDYQVDPVTGKLLHVDFMEVSATEKIRVTIPVVLIGEPIGVKQDKGVLQHGISEIEIEAIPEKIPGHIEVDVSHLEVGDAVHVSDIKFEEGIKVISNPEEVIATVTVEEEEAEVAPSIEETVEPEVIKKGKKAEEEEEK</sequence>
<organism>
    <name type="scientific">Thermodesulfovibrio yellowstonii (strain ATCC 51303 / DSM 11347 / YP87)</name>
    <dbReference type="NCBI Taxonomy" id="289376"/>
    <lineage>
        <taxon>Bacteria</taxon>
        <taxon>Pseudomonadati</taxon>
        <taxon>Nitrospirota</taxon>
        <taxon>Thermodesulfovibrionia</taxon>
        <taxon>Thermodesulfovibrionales</taxon>
        <taxon>Thermodesulfovibrionaceae</taxon>
        <taxon>Thermodesulfovibrio</taxon>
    </lineage>
</organism>
<gene>
    <name evidence="1" type="primary">rplY</name>
    <name evidence="1" type="synonym">ctc</name>
    <name type="ordered locus">THEYE_A1454</name>
</gene>
<name>RL25_THEYD</name>
<keyword id="KW-1185">Reference proteome</keyword>
<keyword id="KW-0687">Ribonucleoprotein</keyword>
<keyword id="KW-0689">Ribosomal protein</keyword>
<keyword id="KW-0694">RNA-binding</keyword>
<keyword id="KW-0699">rRNA-binding</keyword>
<comment type="function">
    <text evidence="1">This is one of the proteins that binds to the 5S RNA in the ribosome where it forms part of the central protuberance.</text>
</comment>
<comment type="subunit">
    <text evidence="1">Part of the 50S ribosomal subunit; part of the 5S rRNA/L5/L18/L25 subcomplex. Contacts the 5S rRNA. Binds to the 5S rRNA independently of L5 and L18.</text>
</comment>
<comment type="similarity">
    <text evidence="1">Belongs to the bacterial ribosomal protein bL25 family. CTC subfamily.</text>
</comment>
<feature type="chain" id="PRO_1000142559" description="Large ribosomal subunit protein bL25">
    <location>
        <begin position="1"/>
        <end position="214"/>
    </location>
</feature>
<feature type="region of interest" description="Disordered" evidence="2">
    <location>
        <begin position="187"/>
        <end position="214"/>
    </location>
</feature>
<feature type="compositionally biased region" description="Basic and acidic residues" evidence="2">
    <location>
        <begin position="200"/>
        <end position="214"/>
    </location>
</feature>